<organism>
    <name type="scientific">Prochlorococcus marinus (strain MIT 9312)</name>
    <dbReference type="NCBI Taxonomy" id="74546"/>
    <lineage>
        <taxon>Bacteria</taxon>
        <taxon>Bacillati</taxon>
        <taxon>Cyanobacteriota</taxon>
        <taxon>Cyanophyceae</taxon>
        <taxon>Synechococcales</taxon>
        <taxon>Prochlorococcaceae</taxon>
        <taxon>Prochlorococcus</taxon>
    </lineage>
</organism>
<proteinExistence type="inferred from homology"/>
<keyword id="KW-0963">Cytoplasm</keyword>
<keyword id="KW-0704">Schiff base</keyword>
<keyword id="KW-0784">Thiamine biosynthesis</keyword>
<keyword id="KW-0808">Transferase</keyword>
<reference key="1">
    <citation type="journal article" date="2006" name="Science">
        <title>Genomic islands and the ecology and evolution of Prochlorococcus.</title>
        <authorList>
            <person name="Coleman M.L."/>
            <person name="Sullivan M.B."/>
            <person name="Martiny A.C."/>
            <person name="Steglich C."/>
            <person name="Barry K."/>
            <person name="Delong E.F."/>
            <person name="Chisholm S.W."/>
        </authorList>
    </citation>
    <scope>NUCLEOTIDE SEQUENCE [LARGE SCALE GENOMIC DNA]</scope>
    <source>
        <strain>MIT 9312</strain>
    </source>
</reference>
<accession>Q317X8</accession>
<gene>
    <name evidence="1" type="primary">thiG1</name>
    <name type="ordered locus">PMT9312_1757</name>
</gene>
<gene>
    <name evidence="1" type="primary">thiG2</name>
    <name type="ordered locus">PMT9312_1756</name>
</gene>
<evidence type="ECO:0000255" key="1">
    <source>
        <dbReference type="HAMAP-Rule" id="MF_00443"/>
    </source>
</evidence>
<dbReference type="EC" id="2.8.1.10" evidence="1"/>
<dbReference type="EMBL" id="CP000111">
    <property type="protein sequence ID" value="ABB50817.1"/>
    <property type="molecule type" value="Genomic_DNA"/>
</dbReference>
<dbReference type="RefSeq" id="WP_011377298.1">
    <property type="nucleotide sequence ID" value="NC_007577.1"/>
</dbReference>
<dbReference type="SMR" id="Q317X8"/>
<dbReference type="STRING" id="74546.PMT9312_1756"/>
<dbReference type="KEGG" id="pmi:PMT9312_1756"/>
<dbReference type="eggNOG" id="COG2022">
    <property type="taxonomic scope" value="Bacteria"/>
</dbReference>
<dbReference type="HOGENOM" id="CLU_062233_1_0_3"/>
<dbReference type="OrthoDB" id="9805935at2"/>
<dbReference type="UniPathway" id="UPA00060"/>
<dbReference type="Proteomes" id="UP000002715">
    <property type="component" value="Chromosome"/>
</dbReference>
<dbReference type="GO" id="GO:0005737">
    <property type="term" value="C:cytoplasm"/>
    <property type="evidence" value="ECO:0007669"/>
    <property type="project" value="UniProtKB-SubCell"/>
</dbReference>
<dbReference type="GO" id="GO:1990107">
    <property type="term" value="F:thiazole synthase activity"/>
    <property type="evidence" value="ECO:0007669"/>
    <property type="project" value="UniProtKB-EC"/>
</dbReference>
<dbReference type="GO" id="GO:0009229">
    <property type="term" value="P:thiamine diphosphate biosynthetic process"/>
    <property type="evidence" value="ECO:0007669"/>
    <property type="project" value="UniProtKB-UniRule"/>
</dbReference>
<dbReference type="CDD" id="cd04728">
    <property type="entry name" value="ThiG"/>
    <property type="match status" value="1"/>
</dbReference>
<dbReference type="Gene3D" id="3.20.20.70">
    <property type="entry name" value="Aldolase class I"/>
    <property type="match status" value="1"/>
</dbReference>
<dbReference type="HAMAP" id="MF_00443">
    <property type="entry name" value="ThiG"/>
    <property type="match status" value="1"/>
</dbReference>
<dbReference type="InterPro" id="IPR013785">
    <property type="entry name" value="Aldolase_TIM"/>
</dbReference>
<dbReference type="InterPro" id="IPR033983">
    <property type="entry name" value="Thiazole_synthase_ThiG"/>
</dbReference>
<dbReference type="InterPro" id="IPR008867">
    <property type="entry name" value="ThiG"/>
</dbReference>
<dbReference type="PANTHER" id="PTHR34266">
    <property type="entry name" value="THIAZOLE SYNTHASE"/>
    <property type="match status" value="1"/>
</dbReference>
<dbReference type="PANTHER" id="PTHR34266:SF2">
    <property type="entry name" value="THIAZOLE SYNTHASE"/>
    <property type="match status" value="1"/>
</dbReference>
<dbReference type="Pfam" id="PF05690">
    <property type="entry name" value="ThiG"/>
    <property type="match status" value="1"/>
</dbReference>
<dbReference type="SUPFAM" id="SSF110399">
    <property type="entry name" value="ThiG-like"/>
    <property type="match status" value="1"/>
</dbReference>
<name>THIG_PROM9</name>
<comment type="function">
    <text evidence="1">Catalyzes the rearrangement of 1-deoxy-D-xylulose 5-phosphate (DXP) to produce the thiazole phosphate moiety of thiamine. Sulfur is provided by the thiocarboxylate moiety of the carrier protein ThiS. In vitro, sulfur can be provided by H(2)S.</text>
</comment>
<comment type="catalytic activity">
    <reaction evidence="1">
        <text>[ThiS sulfur-carrier protein]-C-terminal-Gly-aminoethanethioate + 2-iminoacetate + 1-deoxy-D-xylulose 5-phosphate = [ThiS sulfur-carrier protein]-C-terminal Gly-Gly + 2-[(2R,5Z)-2-carboxy-4-methylthiazol-5(2H)-ylidene]ethyl phosphate + 2 H2O + H(+)</text>
        <dbReference type="Rhea" id="RHEA:26297"/>
        <dbReference type="Rhea" id="RHEA-COMP:12909"/>
        <dbReference type="Rhea" id="RHEA-COMP:19908"/>
        <dbReference type="ChEBI" id="CHEBI:15377"/>
        <dbReference type="ChEBI" id="CHEBI:15378"/>
        <dbReference type="ChEBI" id="CHEBI:57792"/>
        <dbReference type="ChEBI" id="CHEBI:62899"/>
        <dbReference type="ChEBI" id="CHEBI:77846"/>
        <dbReference type="ChEBI" id="CHEBI:90778"/>
        <dbReference type="ChEBI" id="CHEBI:232372"/>
        <dbReference type="EC" id="2.8.1.10"/>
    </reaction>
</comment>
<comment type="pathway">
    <text evidence="1">Cofactor biosynthesis; thiamine diphosphate biosynthesis.</text>
</comment>
<comment type="subunit">
    <text evidence="1">Homotetramer. Forms heterodimers with either ThiH or ThiS.</text>
</comment>
<comment type="subcellular location">
    <subcellularLocation>
        <location evidence="1">Cytoplasm</location>
    </subcellularLocation>
</comment>
<comment type="similarity">
    <text evidence="1">Belongs to the ThiG family.</text>
</comment>
<protein>
    <recommendedName>
        <fullName evidence="1">Thiazole synthase</fullName>
        <ecNumber evidence="1">2.8.1.10</ecNumber>
    </recommendedName>
</protein>
<sequence>MDNYSSLRIGGKQFSSRLMVGTGKYKSTQDMVESLSNSDTEIITVAVRRIKNDQTGDNLLEKINWKKYWMLPNTAGCVNADEAVRIAMLGRELAKLSGQEENNFVKLEVIPDKKYLLPDPIETVKAAEVLIKKGFAVLPYINADPILAKRLEELGCSTVMPLGSPIGSGQGLLNLSNIAIIIENAKVPVIIDAGIGVPSEASQAMELGADGVLINSAIAQAKNPPLMAQAINYGVKAGRQAFLAGRIKKQDFAIASSPEKNISI</sequence>
<feature type="chain" id="PRO_0000236353" description="Thiazole synthase">
    <location>
        <begin position="1"/>
        <end position="264"/>
    </location>
</feature>
<feature type="active site" description="Schiff-base intermediate with DXP" evidence="1">
    <location>
        <position position="106"/>
    </location>
</feature>
<feature type="binding site" evidence="1">
    <location>
        <position position="167"/>
    </location>
    <ligand>
        <name>1-deoxy-D-xylulose 5-phosphate</name>
        <dbReference type="ChEBI" id="CHEBI:57792"/>
    </ligand>
</feature>
<feature type="binding site" evidence="1">
    <location>
        <begin position="193"/>
        <end position="194"/>
    </location>
    <ligand>
        <name>1-deoxy-D-xylulose 5-phosphate</name>
        <dbReference type="ChEBI" id="CHEBI:57792"/>
    </ligand>
</feature>
<feature type="binding site" evidence="1">
    <location>
        <begin position="215"/>
        <end position="216"/>
    </location>
    <ligand>
        <name>1-deoxy-D-xylulose 5-phosphate</name>
        <dbReference type="ChEBI" id="CHEBI:57792"/>
    </ligand>
</feature>